<feature type="chain" id="PRO_0000076990" description="Iron-sulfur cluster insertion protein ErpA">
    <location>
        <begin position="1"/>
        <end position="114"/>
    </location>
</feature>
<feature type="binding site" evidence="2">
    <location>
        <position position="42"/>
    </location>
    <ligand>
        <name>iron-sulfur cluster</name>
        <dbReference type="ChEBI" id="CHEBI:30408"/>
    </ligand>
</feature>
<feature type="binding site" evidence="2">
    <location>
        <position position="106"/>
    </location>
    <ligand>
        <name>iron-sulfur cluster</name>
        <dbReference type="ChEBI" id="CHEBI:30408"/>
    </ligand>
</feature>
<feature type="binding site" evidence="2">
    <location>
        <position position="108"/>
    </location>
    <ligand>
        <name>iron-sulfur cluster</name>
        <dbReference type="ChEBI" id="CHEBI:30408"/>
    </ligand>
</feature>
<feature type="mutagenesis site" description="Does not complement knockout." evidence="1">
    <original>C</original>
    <variation>S</variation>
    <location>
        <position position="42"/>
    </location>
</feature>
<feature type="mutagenesis site" description="Does not complement knockout." evidence="1">
    <original>C</original>
    <variation>S</variation>
    <location>
        <position position="106"/>
    </location>
</feature>
<feature type="mutagenesis site" description="Does not complement knockout." evidence="1">
    <original>C</original>
    <variation>S</variation>
    <location>
        <position position="108"/>
    </location>
</feature>
<comment type="function">
    <text>Probably involved in the insertion of Fe-S clusters into apoproteins in vivo including IspG and/or IspH. Essential for growth under aerobic conditions and for anaerobic respiration but not for fermentation. In vitro it binds Fe-S clusters and transfers them to apo-IspG, which is involved in quinone biosynthesis among many other cell components. Experiments indicate that it is probably also involved in the insertion of other Fe-S clusters than IspG/IspH.</text>
</comment>
<comment type="cofactor">
    <cofactor evidence="1">
        <name>iron-sulfur cluster</name>
        <dbReference type="ChEBI" id="CHEBI:30408"/>
    </cofactor>
    <text evidence="1">Binds 1 iron-sulfur cluster per subunit. A study found 40-50% as [2Fe-2S] clusters, 15-25% as [4Fe-4S] clusters and the rest as paramagnetic iron.</text>
</comment>
<comment type="subunit">
    <text evidence="2">Homodimer.</text>
</comment>
<comment type="disruption phenotype">
    <text evidence="1">Reduced amounts of quinones.</text>
</comment>
<comment type="similarity">
    <text evidence="2">Belongs to the HesB/IscA family.</text>
</comment>
<keyword id="KW-0408">Iron</keyword>
<keyword id="KW-0411">Iron-sulfur</keyword>
<keyword id="KW-0479">Metal-binding</keyword>
<keyword id="KW-1185">Reference proteome</keyword>
<reference key="1">
    <citation type="journal article" date="1994" name="Nucleic Acids Res.">
        <title>Systematic sequencing of the Escherichia coli genome: analysis of the 2.4-4.1 min (110,917-193,643 bp) region.</title>
        <authorList>
            <person name="Fujita N."/>
            <person name="Mori H."/>
            <person name="Yura T."/>
            <person name="Ishihama A."/>
        </authorList>
    </citation>
    <scope>NUCLEOTIDE SEQUENCE [LARGE SCALE GENOMIC DNA]</scope>
    <source>
        <strain>K12 / W3110 / ATCC 27325 / DSM 5911</strain>
    </source>
</reference>
<reference key="2">
    <citation type="submission" date="1997-01" db="EMBL/GenBank/DDBJ databases">
        <title>Sequence of minutes 4-25 of Escherichia coli.</title>
        <authorList>
            <person name="Chung E."/>
            <person name="Allen E."/>
            <person name="Araujo R."/>
            <person name="Aparicio A.M."/>
            <person name="Davis K."/>
            <person name="Duncan M."/>
            <person name="Federspiel N."/>
            <person name="Hyman R."/>
            <person name="Kalman S."/>
            <person name="Komp C."/>
            <person name="Kurdi O."/>
            <person name="Lew H."/>
            <person name="Lin D."/>
            <person name="Namath A."/>
            <person name="Oefner P."/>
            <person name="Roberts D."/>
            <person name="Schramm S."/>
            <person name="Davis R.W."/>
        </authorList>
    </citation>
    <scope>NUCLEOTIDE SEQUENCE [LARGE SCALE GENOMIC DNA]</scope>
    <source>
        <strain>K12 / MG1655 / ATCC 47076</strain>
    </source>
</reference>
<reference key="3">
    <citation type="journal article" date="1997" name="Science">
        <title>The complete genome sequence of Escherichia coli K-12.</title>
        <authorList>
            <person name="Blattner F.R."/>
            <person name="Plunkett G. III"/>
            <person name="Bloch C.A."/>
            <person name="Perna N.T."/>
            <person name="Burland V."/>
            <person name="Riley M."/>
            <person name="Collado-Vides J."/>
            <person name="Glasner J.D."/>
            <person name="Rode C.K."/>
            <person name="Mayhew G.F."/>
            <person name="Gregor J."/>
            <person name="Davis N.W."/>
            <person name="Kirkpatrick H.A."/>
            <person name="Goeden M.A."/>
            <person name="Rose D.J."/>
            <person name="Mau B."/>
            <person name="Shao Y."/>
        </authorList>
    </citation>
    <scope>NUCLEOTIDE SEQUENCE [LARGE SCALE GENOMIC DNA]</scope>
    <source>
        <strain>K12 / MG1655 / ATCC 47076</strain>
    </source>
</reference>
<reference key="4">
    <citation type="journal article" date="2006" name="Mol. Syst. Biol.">
        <title>Highly accurate genome sequences of Escherichia coli K-12 strains MG1655 and W3110.</title>
        <authorList>
            <person name="Hayashi K."/>
            <person name="Morooka N."/>
            <person name="Yamamoto Y."/>
            <person name="Fujita K."/>
            <person name="Isono K."/>
            <person name="Choi S."/>
            <person name="Ohtsubo E."/>
            <person name="Baba T."/>
            <person name="Wanner B.L."/>
            <person name="Mori H."/>
            <person name="Horiuchi T."/>
        </authorList>
    </citation>
    <scope>NUCLEOTIDE SEQUENCE [LARGE SCALE GENOMIC DNA]</scope>
    <source>
        <strain>K12 / W3110 / ATCC 27325 / DSM 5911</strain>
    </source>
</reference>
<reference key="5">
    <citation type="journal article" date="2007" name="Proc. Natl. Acad. Sci. U.S.A.">
        <title>ErpA, an iron sulfur (Fe S) protein of the A-type essential for respiratory metabolism in Escherichia coli.</title>
        <authorList>
            <person name="Loiseau L."/>
            <person name="Gerez C."/>
            <person name="Bekker M."/>
            <person name="Ollagnier-de Choudens S."/>
            <person name="Py B."/>
            <person name="Sanakis Y."/>
            <person name="Teixeira de Mattos J."/>
            <person name="Fontecave M."/>
            <person name="Barras F."/>
        </authorList>
    </citation>
    <scope>CHARACTERIZATION</scope>
    <scope>DISRUPTION PHENOTYPE</scope>
    <scope>COFACTOR</scope>
    <scope>MUTAGENESIS OF CYS-42; CYS-106 AND CYS-108</scope>
    <source>
        <strain>K12 / MG1655 / ATCC 47076</strain>
    </source>
</reference>
<proteinExistence type="evidence at protein level"/>
<dbReference type="EMBL" id="U70214">
    <property type="protein sequence ID" value="AAB08586.1"/>
    <property type="molecule type" value="Genomic_DNA"/>
</dbReference>
<dbReference type="EMBL" id="U00096">
    <property type="protein sequence ID" value="AAC73267.1"/>
    <property type="molecule type" value="Genomic_DNA"/>
</dbReference>
<dbReference type="EMBL" id="AP009048">
    <property type="protein sequence ID" value="BAB96733.1"/>
    <property type="molecule type" value="Genomic_DNA"/>
</dbReference>
<dbReference type="PIR" id="S45225">
    <property type="entry name" value="S45225"/>
</dbReference>
<dbReference type="RefSeq" id="NP_414698.1">
    <property type="nucleotide sequence ID" value="NC_000913.3"/>
</dbReference>
<dbReference type="RefSeq" id="WP_001295564.1">
    <property type="nucleotide sequence ID" value="NZ_STEB01000032.1"/>
</dbReference>
<dbReference type="SMR" id="P0ACC3"/>
<dbReference type="BioGRID" id="4261657">
    <property type="interactions" value="308"/>
</dbReference>
<dbReference type="DIP" id="DIP-48196N"/>
<dbReference type="FunCoup" id="P0ACC3">
    <property type="interactions" value="637"/>
</dbReference>
<dbReference type="IntAct" id="P0ACC3">
    <property type="interactions" value="8"/>
</dbReference>
<dbReference type="STRING" id="511145.b0156"/>
<dbReference type="ChEMBL" id="CHEMBL3309017"/>
<dbReference type="jPOST" id="P0ACC3"/>
<dbReference type="PaxDb" id="511145-b0156"/>
<dbReference type="EnsemblBacteria" id="AAC73267">
    <property type="protein sequence ID" value="AAC73267"/>
    <property type="gene ID" value="b0156"/>
</dbReference>
<dbReference type="GeneID" id="93777270"/>
<dbReference type="GeneID" id="944857"/>
<dbReference type="KEGG" id="ecj:JW0152"/>
<dbReference type="KEGG" id="eco:b0156"/>
<dbReference type="KEGG" id="ecoc:C3026_00710"/>
<dbReference type="PATRIC" id="fig|1411691.4.peg.2124"/>
<dbReference type="EchoBASE" id="EB2236"/>
<dbReference type="eggNOG" id="COG0316">
    <property type="taxonomic scope" value="Bacteria"/>
</dbReference>
<dbReference type="HOGENOM" id="CLU_069054_5_3_6"/>
<dbReference type="InParanoid" id="P0ACC3"/>
<dbReference type="OMA" id="LYIYGMQ"/>
<dbReference type="OrthoDB" id="9801228at2"/>
<dbReference type="PhylomeDB" id="P0ACC3"/>
<dbReference type="BioCyc" id="EcoCyc:EG12332-MONOMER"/>
<dbReference type="PRO" id="PR:P0ACC3"/>
<dbReference type="Proteomes" id="UP000000625">
    <property type="component" value="Chromosome"/>
</dbReference>
<dbReference type="GO" id="GO:0005829">
    <property type="term" value="C:cytosol"/>
    <property type="evidence" value="ECO:0000314"/>
    <property type="project" value="EcoCyc"/>
</dbReference>
<dbReference type="GO" id="GO:0051537">
    <property type="term" value="F:2 iron, 2 sulfur cluster binding"/>
    <property type="evidence" value="ECO:0000314"/>
    <property type="project" value="EcoCyc"/>
</dbReference>
<dbReference type="GO" id="GO:0051539">
    <property type="term" value="F:4 iron, 4 sulfur cluster binding"/>
    <property type="evidence" value="ECO:0000314"/>
    <property type="project" value="EcoCyc"/>
</dbReference>
<dbReference type="GO" id="GO:0005506">
    <property type="term" value="F:iron ion binding"/>
    <property type="evidence" value="ECO:0000318"/>
    <property type="project" value="GO_Central"/>
</dbReference>
<dbReference type="GO" id="GO:0009060">
    <property type="term" value="P:aerobic respiration"/>
    <property type="evidence" value="ECO:0000315"/>
    <property type="project" value="EcoCyc"/>
</dbReference>
<dbReference type="GO" id="GO:0009061">
    <property type="term" value="P:anaerobic respiration"/>
    <property type="evidence" value="ECO:0000315"/>
    <property type="project" value="EcoCyc"/>
</dbReference>
<dbReference type="GO" id="GO:0016226">
    <property type="term" value="P:iron-sulfur cluster assembly"/>
    <property type="evidence" value="ECO:0000314"/>
    <property type="project" value="EcoCyc"/>
</dbReference>
<dbReference type="GO" id="GO:0051604">
    <property type="term" value="P:protein maturation"/>
    <property type="evidence" value="ECO:0000314"/>
    <property type="project" value="EcoCyc"/>
</dbReference>
<dbReference type="FunFam" id="2.60.300.12:FF:000002">
    <property type="entry name" value="Iron-sulfur cluster insertion protein ErpA"/>
    <property type="match status" value="1"/>
</dbReference>
<dbReference type="Gene3D" id="2.60.300.12">
    <property type="entry name" value="HesB-like domain"/>
    <property type="match status" value="1"/>
</dbReference>
<dbReference type="HAMAP" id="MF_01380">
    <property type="entry name" value="Fe_S_insert_ErpA"/>
    <property type="match status" value="1"/>
</dbReference>
<dbReference type="InterPro" id="IPR000361">
    <property type="entry name" value="FeS_biogenesis"/>
</dbReference>
<dbReference type="InterPro" id="IPR016092">
    <property type="entry name" value="FeS_cluster_insertion"/>
</dbReference>
<dbReference type="InterPro" id="IPR017870">
    <property type="entry name" value="FeS_cluster_insertion_CS"/>
</dbReference>
<dbReference type="InterPro" id="IPR023063">
    <property type="entry name" value="FeS_cluster_insertion_RrpA"/>
</dbReference>
<dbReference type="InterPro" id="IPR035903">
    <property type="entry name" value="HesB-like_dom_sf"/>
</dbReference>
<dbReference type="NCBIfam" id="TIGR00049">
    <property type="entry name" value="iron-sulfur cluster assembly accessory protein"/>
    <property type="match status" value="1"/>
</dbReference>
<dbReference type="NCBIfam" id="NF010147">
    <property type="entry name" value="PRK13623.1"/>
    <property type="match status" value="1"/>
</dbReference>
<dbReference type="PANTHER" id="PTHR43011">
    <property type="entry name" value="IRON-SULFUR CLUSTER ASSEMBLY 2 HOMOLOG, MITOCHONDRIAL"/>
    <property type="match status" value="1"/>
</dbReference>
<dbReference type="PANTHER" id="PTHR43011:SF1">
    <property type="entry name" value="IRON-SULFUR CLUSTER ASSEMBLY 2 HOMOLOG, MITOCHONDRIAL"/>
    <property type="match status" value="1"/>
</dbReference>
<dbReference type="Pfam" id="PF01521">
    <property type="entry name" value="Fe-S_biosyn"/>
    <property type="match status" value="1"/>
</dbReference>
<dbReference type="SUPFAM" id="SSF89360">
    <property type="entry name" value="HesB-like domain"/>
    <property type="match status" value="1"/>
</dbReference>
<dbReference type="PROSITE" id="PS01152">
    <property type="entry name" value="HESB"/>
    <property type="match status" value="1"/>
</dbReference>
<evidence type="ECO:0000269" key="1">
    <source>
    </source>
</evidence>
<evidence type="ECO:0000305" key="2"/>
<accession>P0ACC3</accession>
<accession>P37026</accession>
<sequence>MSDDVALPLEFTDAAANKVKSLIADEDNPNLKLRVYITGGGCSGFQYGFTFDDQVNEGDMTIEKQGVGLVVDPMSLQYLVGGSVDYTEGLEGSRFIVTNPNAKSTCGCGSSFSI</sequence>
<name>ERPA_ECOLI</name>
<organism>
    <name type="scientific">Escherichia coli (strain K12)</name>
    <dbReference type="NCBI Taxonomy" id="83333"/>
    <lineage>
        <taxon>Bacteria</taxon>
        <taxon>Pseudomonadati</taxon>
        <taxon>Pseudomonadota</taxon>
        <taxon>Gammaproteobacteria</taxon>
        <taxon>Enterobacterales</taxon>
        <taxon>Enterobacteriaceae</taxon>
        <taxon>Escherichia</taxon>
    </lineage>
</organism>
<protein>
    <recommendedName>
        <fullName>Iron-sulfur cluster insertion protein ErpA</fullName>
    </recommendedName>
</protein>
<gene>
    <name type="primary">erpA</name>
    <name type="synonym">yadR</name>
    <name type="ordered locus">b0156</name>
    <name type="ordered locus">JW0152</name>
</gene>